<gene>
    <name evidence="1" type="primary">rpmD</name>
    <name type="ordered locus">ECUMN_3775</name>
</gene>
<organism>
    <name type="scientific">Escherichia coli O17:K52:H18 (strain UMN026 / ExPEC)</name>
    <dbReference type="NCBI Taxonomy" id="585056"/>
    <lineage>
        <taxon>Bacteria</taxon>
        <taxon>Pseudomonadati</taxon>
        <taxon>Pseudomonadota</taxon>
        <taxon>Gammaproteobacteria</taxon>
        <taxon>Enterobacterales</taxon>
        <taxon>Enterobacteriaceae</taxon>
        <taxon>Escherichia</taxon>
    </lineage>
</organism>
<protein>
    <recommendedName>
        <fullName evidence="1">Large ribosomal subunit protein uL30</fullName>
    </recommendedName>
    <alternativeName>
        <fullName evidence="2">50S ribosomal protein L30</fullName>
    </alternativeName>
</protein>
<evidence type="ECO:0000255" key="1">
    <source>
        <dbReference type="HAMAP-Rule" id="MF_01371"/>
    </source>
</evidence>
<evidence type="ECO:0000305" key="2"/>
<proteinExistence type="inferred from homology"/>
<reference key="1">
    <citation type="journal article" date="2009" name="PLoS Genet.">
        <title>Organised genome dynamics in the Escherichia coli species results in highly diverse adaptive paths.</title>
        <authorList>
            <person name="Touchon M."/>
            <person name="Hoede C."/>
            <person name="Tenaillon O."/>
            <person name="Barbe V."/>
            <person name="Baeriswyl S."/>
            <person name="Bidet P."/>
            <person name="Bingen E."/>
            <person name="Bonacorsi S."/>
            <person name="Bouchier C."/>
            <person name="Bouvet O."/>
            <person name="Calteau A."/>
            <person name="Chiapello H."/>
            <person name="Clermont O."/>
            <person name="Cruveiller S."/>
            <person name="Danchin A."/>
            <person name="Diard M."/>
            <person name="Dossat C."/>
            <person name="Karoui M.E."/>
            <person name="Frapy E."/>
            <person name="Garry L."/>
            <person name="Ghigo J.M."/>
            <person name="Gilles A.M."/>
            <person name="Johnson J."/>
            <person name="Le Bouguenec C."/>
            <person name="Lescat M."/>
            <person name="Mangenot S."/>
            <person name="Martinez-Jehanne V."/>
            <person name="Matic I."/>
            <person name="Nassif X."/>
            <person name="Oztas S."/>
            <person name="Petit M.A."/>
            <person name="Pichon C."/>
            <person name="Rouy Z."/>
            <person name="Ruf C.S."/>
            <person name="Schneider D."/>
            <person name="Tourret J."/>
            <person name="Vacherie B."/>
            <person name="Vallenet D."/>
            <person name="Medigue C."/>
            <person name="Rocha E.P.C."/>
            <person name="Denamur E."/>
        </authorList>
    </citation>
    <scope>NUCLEOTIDE SEQUENCE [LARGE SCALE GENOMIC DNA]</scope>
    <source>
        <strain>UMN026 / ExPEC</strain>
    </source>
</reference>
<name>RL30_ECOLU</name>
<keyword id="KW-0687">Ribonucleoprotein</keyword>
<keyword id="KW-0689">Ribosomal protein</keyword>
<dbReference type="EMBL" id="CU928163">
    <property type="protein sequence ID" value="CAR14923.1"/>
    <property type="molecule type" value="Genomic_DNA"/>
</dbReference>
<dbReference type="RefSeq" id="WP_001140433.1">
    <property type="nucleotide sequence ID" value="NC_011751.1"/>
</dbReference>
<dbReference type="RefSeq" id="YP_002414428.1">
    <property type="nucleotide sequence ID" value="NC_011751.1"/>
</dbReference>
<dbReference type="SMR" id="B7NDS3"/>
<dbReference type="STRING" id="585056.ECUMN_3775"/>
<dbReference type="GeneID" id="93778685"/>
<dbReference type="KEGG" id="eum:ECUMN_3775"/>
<dbReference type="PATRIC" id="fig|585056.7.peg.3950"/>
<dbReference type="HOGENOM" id="CLU_131047_1_4_6"/>
<dbReference type="Proteomes" id="UP000007097">
    <property type="component" value="Chromosome"/>
</dbReference>
<dbReference type="GO" id="GO:0022625">
    <property type="term" value="C:cytosolic large ribosomal subunit"/>
    <property type="evidence" value="ECO:0007669"/>
    <property type="project" value="TreeGrafter"/>
</dbReference>
<dbReference type="GO" id="GO:0003735">
    <property type="term" value="F:structural constituent of ribosome"/>
    <property type="evidence" value="ECO:0007669"/>
    <property type="project" value="InterPro"/>
</dbReference>
<dbReference type="GO" id="GO:0006412">
    <property type="term" value="P:translation"/>
    <property type="evidence" value="ECO:0007669"/>
    <property type="project" value="UniProtKB-UniRule"/>
</dbReference>
<dbReference type="CDD" id="cd01658">
    <property type="entry name" value="Ribosomal_L30"/>
    <property type="match status" value="1"/>
</dbReference>
<dbReference type="FunFam" id="3.30.1390.20:FF:000001">
    <property type="entry name" value="50S ribosomal protein L30"/>
    <property type="match status" value="1"/>
</dbReference>
<dbReference type="Gene3D" id="3.30.1390.20">
    <property type="entry name" value="Ribosomal protein L30, ferredoxin-like fold domain"/>
    <property type="match status" value="1"/>
</dbReference>
<dbReference type="HAMAP" id="MF_01371_B">
    <property type="entry name" value="Ribosomal_uL30_B"/>
    <property type="match status" value="1"/>
</dbReference>
<dbReference type="InterPro" id="IPR036919">
    <property type="entry name" value="Ribo_uL30_ferredoxin-like_sf"/>
</dbReference>
<dbReference type="InterPro" id="IPR005996">
    <property type="entry name" value="Ribosomal_uL30_bac-type"/>
</dbReference>
<dbReference type="InterPro" id="IPR018038">
    <property type="entry name" value="Ribosomal_uL30_CS"/>
</dbReference>
<dbReference type="InterPro" id="IPR016082">
    <property type="entry name" value="Ribosomal_uL30_ferredoxin-like"/>
</dbReference>
<dbReference type="NCBIfam" id="TIGR01308">
    <property type="entry name" value="rpmD_bact"/>
    <property type="match status" value="1"/>
</dbReference>
<dbReference type="PANTHER" id="PTHR15892:SF2">
    <property type="entry name" value="LARGE RIBOSOMAL SUBUNIT PROTEIN UL30M"/>
    <property type="match status" value="1"/>
</dbReference>
<dbReference type="PANTHER" id="PTHR15892">
    <property type="entry name" value="MITOCHONDRIAL RIBOSOMAL PROTEIN L30"/>
    <property type="match status" value="1"/>
</dbReference>
<dbReference type="Pfam" id="PF00327">
    <property type="entry name" value="Ribosomal_L30"/>
    <property type="match status" value="1"/>
</dbReference>
<dbReference type="PIRSF" id="PIRSF002211">
    <property type="entry name" value="Ribosomal_L30_bac-type"/>
    <property type="match status" value="1"/>
</dbReference>
<dbReference type="SUPFAM" id="SSF55129">
    <property type="entry name" value="Ribosomal protein L30p/L7e"/>
    <property type="match status" value="1"/>
</dbReference>
<dbReference type="PROSITE" id="PS00634">
    <property type="entry name" value="RIBOSOMAL_L30"/>
    <property type="match status" value="1"/>
</dbReference>
<comment type="subunit">
    <text evidence="1">Part of the 50S ribosomal subunit.</text>
</comment>
<comment type="similarity">
    <text evidence="1">Belongs to the universal ribosomal protein uL30 family.</text>
</comment>
<feature type="chain" id="PRO_1000144680" description="Large ribosomal subunit protein uL30">
    <location>
        <begin position="1"/>
        <end position="59"/>
    </location>
</feature>
<sequence length="59" mass="6542">MAKTIKITQTRSAIGRLPKHKATLLGLGLRRIGHTVEREDTPAIRGMINAVSFMVKVEE</sequence>
<accession>B7NDS3</accession>